<keyword id="KW-0007">Acetylation</keyword>
<keyword id="KW-0066">ATP synthesis</keyword>
<keyword id="KW-0375">Hydrogen ion transport</keyword>
<keyword id="KW-0406">Ion transport</keyword>
<keyword id="KW-0472">Membrane</keyword>
<keyword id="KW-0496">Mitochondrion</keyword>
<keyword id="KW-0999">Mitochondrion inner membrane</keyword>
<keyword id="KW-1185">Reference proteome</keyword>
<keyword id="KW-0809">Transit peptide</keyword>
<keyword id="KW-0813">Transport</keyword>
<keyword id="KW-0832">Ubl conjugation</keyword>
<accession>B0VXH3</accession>
<sequence length="213" mass="23279">MAAPAVSGVSQQVRYFGTSVVRPFAKLVRPPVQVYGVEGRYATALYSAASKQKKLEQVEKELLRVAQILKEPKVAASVLNPYVKHSIKVKSLSDIIAKERFSPLTTNLINLLAENGRLSNTQGVVSAFSTMMSVHRGEVPCTVTTASPLEEATLSELKTVLKSFLSQGQILKLEVKTDPSIMGGMIVRIGEKYVDMSAKTKIQKLSKAMREVI</sequence>
<protein>
    <recommendedName>
        <fullName evidence="4">ATP synthase peripheral stalk subunit OSCP, mitochondrial</fullName>
    </recommendedName>
    <alternativeName>
        <fullName evidence="6">ATP synthase subunit O</fullName>
    </alternativeName>
    <alternativeName>
        <fullName>Oligomycin sensitivity conferral protein</fullName>
        <shortName>OSCP</shortName>
    </alternativeName>
</protein>
<name>ATPO_CALJA</name>
<evidence type="ECO:0000250" key="1"/>
<evidence type="ECO:0000250" key="2">
    <source>
        <dbReference type="UniProtKB" id="P13621"/>
    </source>
</evidence>
<evidence type="ECO:0000250" key="3">
    <source>
        <dbReference type="UniProtKB" id="P19483"/>
    </source>
</evidence>
<evidence type="ECO:0000250" key="4">
    <source>
        <dbReference type="UniProtKB" id="P48047"/>
    </source>
</evidence>
<evidence type="ECO:0000250" key="5">
    <source>
        <dbReference type="UniProtKB" id="Q9DB20"/>
    </source>
</evidence>
<evidence type="ECO:0000305" key="6"/>
<proteinExistence type="inferred from homology"/>
<gene>
    <name evidence="4" type="primary">ATP5PO</name>
    <name type="synonym">ATP5O</name>
</gene>
<reference key="1">
    <citation type="submission" date="2008-02" db="EMBL/GenBank/DDBJ databases">
        <title>NISC comparative sequencing initiative.</title>
        <authorList>
            <person name="Antonellis A."/>
            <person name="Benjamin B."/>
            <person name="Blakesley R.W."/>
            <person name="Bouffard G.G."/>
            <person name="Brinkley C."/>
            <person name="Brooks S."/>
            <person name="Chu G."/>
            <person name="Chub I."/>
            <person name="Coleman H."/>
            <person name="Fuksenko T."/>
            <person name="Gestole M."/>
            <person name="Gregory M."/>
            <person name="Guan X."/>
            <person name="Gupta J."/>
            <person name="Gurson N."/>
            <person name="Han E."/>
            <person name="Han J."/>
            <person name="Hansen N."/>
            <person name="Hargrove A."/>
            <person name="Hines-Harris K."/>
            <person name="Ho S.-L."/>
            <person name="Hu P."/>
            <person name="Hunter G."/>
            <person name="Hurle B."/>
            <person name="Idol J.R."/>
            <person name="Johnson T."/>
            <person name="Knight E."/>
            <person name="Kwong P."/>
            <person name="Lee-Lin S.-Q."/>
            <person name="Legaspi R."/>
            <person name="Madden M."/>
            <person name="Maduro Q.L."/>
            <person name="Maduro V.B."/>
            <person name="Margulies E.H."/>
            <person name="Masiello C."/>
            <person name="Maskeri B."/>
            <person name="McDowell J."/>
            <person name="Merkulov G."/>
            <person name="Montemayor C."/>
            <person name="Mullikin J.C."/>
            <person name="Park M."/>
            <person name="Prasad A."/>
            <person name="Ramsahoye C."/>
            <person name="Reddix-Dugue N."/>
            <person name="Riebow N."/>
            <person name="Schandler K."/>
            <person name="Schueler M.G."/>
            <person name="Sison C."/>
            <person name="Smith L."/>
            <person name="Stantripop S."/>
            <person name="Thomas J.W."/>
            <person name="Thomas P.J."/>
            <person name="Tsipouri V."/>
            <person name="Young A."/>
            <person name="Green E.D."/>
        </authorList>
    </citation>
    <scope>NUCLEOTIDE SEQUENCE [LARGE SCALE GENOMIC DNA]</scope>
</reference>
<dbReference type="EMBL" id="DP000592">
    <property type="protein sequence ID" value="ABZ80257.1"/>
    <property type="molecule type" value="Genomic_DNA"/>
</dbReference>
<dbReference type="RefSeq" id="XP_008984870.1">
    <property type="nucleotide sequence ID" value="XM_008986622.4"/>
</dbReference>
<dbReference type="SMR" id="B0VXH3"/>
<dbReference type="FunCoup" id="B0VXH3">
    <property type="interactions" value="2204"/>
</dbReference>
<dbReference type="STRING" id="9483.ENSCJAP00000056072"/>
<dbReference type="Ensembl" id="ENSCJAT00000072136.3">
    <property type="protein sequence ID" value="ENSCJAP00000056072.1"/>
    <property type="gene ID" value="ENSCJAG00000039761.3"/>
</dbReference>
<dbReference type="GeneID" id="103789634"/>
<dbReference type="KEGG" id="cjc:103789634"/>
<dbReference type="CTD" id="539"/>
<dbReference type="eggNOG" id="KOG1662">
    <property type="taxonomic scope" value="Eukaryota"/>
</dbReference>
<dbReference type="GeneTree" id="ENSGT00390000015060"/>
<dbReference type="HOGENOM" id="CLU_085114_0_0_1"/>
<dbReference type="InParanoid" id="B0VXH3"/>
<dbReference type="OMA" id="MVDNIQD"/>
<dbReference type="OrthoDB" id="1262810at2759"/>
<dbReference type="TreeFam" id="TF106241"/>
<dbReference type="Proteomes" id="UP000008225">
    <property type="component" value="Chromosome 21"/>
</dbReference>
<dbReference type="Bgee" id="ENSCJAG00000039761">
    <property type="expression patterns" value="Expressed in heart and 6 other cell types or tissues"/>
</dbReference>
<dbReference type="GO" id="GO:0005743">
    <property type="term" value="C:mitochondrial inner membrane"/>
    <property type="evidence" value="ECO:0007669"/>
    <property type="project" value="UniProtKB-SubCell"/>
</dbReference>
<dbReference type="GO" id="GO:0005886">
    <property type="term" value="C:plasma membrane"/>
    <property type="evidence" value="ECO:0007669"/>
    <property type="project" value="Ensembl"/>
</dbReference>
<dbReference type="GO" id="GO:0045259">
    <property type="term" value="C:proton-transporting ATP synthase complex"/>
    <property type="evidence" value="ECO:0000250"/>
    <property type="project" value="UniProtKB"/>
</dbReference>
<dbReference type="GO" id="GO:0046933">
    <property type="term" value="F:proton-transporting ATP synthase activity, rotational mechanism"/>
    <property type="evidence" value="ECO:0007669"/>
    <property type="project" value="Ensembl"/>
</dbReference>
<dbReference type="GO" id="GO:0042776">
    <property type="term" value="P:proton motive force-driven mitochondrial ATP synthesis"/>
    <property type="evidence" value="ECO:0007669"/>
    <property type="project" value="Ensembl"/>
</dbReference>
<dbReference type="FunFam" id="1.10.520.20:FF:000002">
    <property type="entry name" value="ATP synthase subunit O, mitochondrial"/>
    <property type="match status" value="1"/>
</dbReference>
<dbReference type="Gene3D" id="1.10.520.20">
    <property type="entry name" value="N-terminal domain of the delta subunit of the F1F0-ATP synthase"/>
    <property type="match status" value="1"/>
</dbReference>
<dbReference type="HAMAP" id="MF_01416">
    <property type="entry name" value="ATP_synth_delta_bact"/>
    <property type="match status" value="1"/>
</dbReference>
<dbReference type="InterPro" id="IPR026015">
    <property type="entry name" value="ATP_synth_OSCP/delta_N_sf"/>
</dbReference>
<dbReference type="InterPro" id="IPR020781">
    <property type="entry name" value="ATPase_OSCP/d_CS"/>
</dbReference>
<dbReference type="InterPro" id="IPR000711">
    <property type="entry name" value="ATPase_OSCP/dsu"/>
</dbReference>
<dbReference type="NCBIfam" id="TIGR01145">
    <property type="entry name" value="ATP_synt_delta"/>
    <property type="match status" value="1"/>
</dbReference>
<dbReference type="PANTHER" id="PTHR11910">
    <property type="entry name" value="ATP SYNTHASE DELTA CHAIN"/>
    <property type="match status" value="1"/>
</dbReference>
<dbReference type="Pfam" id="PF00213">
    <property type="entry name" value="OSCP"/>
    <property type="match status" value="1"/>
</dbReference>
<dbReference type="PRINTS" id="PR00125">
    <property type="entry name" value="ATPASEDELTA"/>
</dbReference>
<dbReference type="SUPFAM" id="SSF47928">
    <property type="entry name" value="N-terminal domain of the delta subunit of the F1F0-ATP synthase"/>
    <property type="match status" value="1"/>
</dbReference>
<dbReference type="PROSITE" id="PS00389">
    <property type="entry name" value="ATPASE_DELTA"/>
    <property type="match status" value="1"/>
</dbReference>
<organism>
    <name type="scientific">Callithrix jacchus</name>
    <name type="common">White-tufted-ear marmoset</name>
    <dbReference type="NCBI Taxonomy" id="9483"/>
    <lineage>
        <taxon>Eukaryota</taxon>
        <taxon>Metazoa</taxon>
        <taxon>Chordata</taxon>
        <taxon>Craniata</taxon>
        <taxon>Vertebrata</taxon>
        <taxon>Euteleostomi</taxon>
        <taxon>Mammalia</taxon>
        <taxon>Eutheria</taxon>
        <taxon>Euarchontoglires</taxon>
        <taxon>Primates</taxon>
        <taxon>Haplorrhini</taxon>
        <taxon>Platyrrhini</taxon>
        <taxon>Cebidae</taxon>
        <taxon>Callitrichinae</taxon>
        <taxon>Callithrix</taxon>
        <taxon>Callithrix</taxon>
    </lineage>
</organism>
<comment type="function">
    <text evidence="2 3 4">Subunit OSCP, of the mitochondrial membrane ATP synthase complex (F(1)F(0) ATP synthase or Complex V) that produces ATP from ADP in the presence of a proton gradient across the membrane which is generated by electron transport complexes of the respiratory chain. ATP synthase complex consist of a soluble F(1) head domain - the catalytic core - and a membrane F(1) domain - the membrane proton channel. These two domains are linked by a central stalk rotating inside the F(1) region and a stationary peripheral stalk. During catalysis, ATP synthesis in the catalytic domain of F(1) is coupled via a rotary mechanism of the central stalk subunits to proton translocation (By similarity). In vivo, can only synthesize ATP although its ATP hydrolase activity can be activated artificially in vitro (By similarity). Part of the complex F(0) domain (By similarity). Part of the complex F(0) domain and the peripheric stalk, which acts as a stator to hold the catalytic alpha(3)beta(3) subcomplex and subunit a/ATP6 static relative to the rotary elements (By similarity).</text>
</comment>
<comment type="subunit">
    <text evidence="4">Component of the ATP synthase complex composed at least of ATP5F1A/subunit alpha, ATP5F1B/subunit beta, ATP5MC1/subunit c (homooctomer), MT-ATP6/subunit a, MT-ATP8/subunit 8, ATP5ME/subunit e, ATP5MF/subunit f, ATP5MG/subunit g, ATP5MK/subunit k, ATP5MJ/subunit j, ATP5F1C/subunit gamma, ATP5F1D/subunit delta, ATP5F1E/subunit epsilon, ATP5PF/subunit F6, ATP5PB/subunit b, ATP5PD/subunit d, ATP5PO/subunit OSCP. ATP synthase complex consists of a soluble F(1) head domain (subunits alpha(3) and beta(3)) - the catalytic core - and a membrane F(0) domain - the membrane proton channel (subunits c, a, 8, e, f, g, k and j). These two domains are linked by a central stalk (subunits gamma, delta, and epsilon) rotating inside the F1 region and a stationary peripheral stalk (subunits F6, b, d, and OSCP).</text>
</comment>
<comment type="subcellular location">
    <subcellularLocation>
        <location evidence="1">Mitochondrion</location>
    </subcellularLocation>
    <subcellularLocation>
        <location evidence="1">Mitochondrion inner membrane</location>
    </subcellularLocation>
</comment>
<comment type="PTM">
    <text evidence="4">Acetylation at Lys-162 decreases ATP production. Deacetylated by SIRT3 (By similarity).</text>
</comment>
<comment type="PTM">
    <text evidence="4">In response to mitochondrial stress, the precursor protein is ubiquitinated by the SIFI complex in the cytoplasm before mitochondrial import, leading to its degradation. Within the SIFI complex, UBR4 initiates ubiquitin chain that are further elongated or branched by KCMF1.</text>
</comment>
<comment type="similarity">
    <text evidence="6">Belongs to the ATPase delta chain family.</text>
</comment>
<feature type="transit peptide" description="Mitochondrion" evidence="1">
    <location>
        <begin position="1"/>
        <end position="23"/>
    </location>
</feature>
<feature type="chain" id="PRO_0000350576" description="ATP synthase peripheral stalk subunit OSCP, mitochondrial">
    <location>
        <begin position="24"/>
        <end position="213"/>
    </location>
</feature>
<feature type="short sequence motif" description="SIFI-degron" evidence="4">
    <location>
        <begin position="5"/>
        <end position="23"/>
    </location>
</feature>
<feature type="modified residue" description="N6-acetyllysine" evidence="5">
    <location>
        <position position="54"/>
    </location>
</feature>
<feature type="modified residue" description="N6-acetyllysine" evidence="5">
    <location>
        <position position="60"/>
    </location>
</feature>
<feature type="modified residue" description="N6-acetyllysine" evidence="5">
    <location>
        <position position="70"/>
    </location>
</feature>
<feature type="modified residue" description="N6-acetyllysine" evidence="5">
    <location>
        <position position="73"/>
    </location>
</feature>
<feature type="modified residue" description="N6-succinyllysine" evidence="5">
    <location>
        <position position="90"/>
    </location>
</feature>
<feature type="modified residue" description="N6-acetyllysine; alternate" evidence="5">
    <location>
        <position position="158"/>
    </location>
</feature>
<feature type="modified residue" description="N6-succinyllysine; alternate" evidence="5">
    <location>
        <position position="158"/>
    </location>
</feature>
<feature type="modified residue" description="N6-acetyllysine; alternate" evidence="4">
    <location>
        <position position="162"/>
    </location>
</feature>
<feature type="modified residue" description="N6-succinyllysine; alternate" evidence="5">
    <location>
        <position position="162"/>
    </location>
</feature>
<feature type="modified residue" description="N6-acetyllysine" evidence="4">
    <location>
        <position position="172"/>
    </location>
</feature>
<feature type="modified residue" description="N6-acetyllysine" evidence="5">
    <location>
        <position position="176"/>
    </location>
</feature>
<feature type="modified residue" description="N6-acetyllysine" evidence="4">
    <location>
        <position position="192"/>
    </location>
</feature>
<feature type="modified residue" description="N6-succinyllysine" evidence="5">
    <location>
        <position position="199"/>
    </location>
</feature>